<evidence type="ECO:0000255" key="1">
    <source>
        <dbReference type="HAMAP-Rule" id="MF_00175"/>
    </source>
</evidence>
<evidence type="ECO:0000255" key="2">
    <source>
        <dbReference type="PROSITE-ProRule" id="PRU01250"/>
    </source>
</evidence>
<proteinExistence type="inferred from homology"/>
<comment type="function">
    <text evidence="1">ATP-dependent specificity component of the Clp protease. It directs the protease to specific substrates. Can perform chaperone functions in the absence of ClpP.</text>
</comment>
<comment type="subunit">
    <text evidence="1">Component of the ClpX-ClpP complex. Forms a hexameric ring that, in the presence of ATP, binds to fourteen ClpP subunits assembled into a disk-like structure with a central cavity, resembling the structure of eukaryotic proteasomes.</text>
</comment>
<comment type="similarity">
    <text evidence="1">Belongs to the ClpX chaperone family.</text>
</comment>
<keyword id="KW-0067">ATP-binding</keyword>
<keyword id="KW-0143">Chaperone</keyword>
<keyword id="KW-0479">Metal-binding</keyword>
<keyword id="KW-0547">Nucleotide-binding</keyword>
<keyword id="KW-1185">Reference proteome</keyword>
<keyword id="KW-0862">Zinc</keyword>
<reference key="1">
    <citation type="submission" date="2008-01" db="EMBL/GenBank/DDBJ databases">
        <title>Complete sequence of Thermoanaerobacter pseudethanolicus 39E.</title>
        <authorList>
            <person name="Copeland A."/>
            <person name="Lucas S."/>
            <person name="Lapidus A."/>
            <person name="Barry K."/>
            <person name="Glavina del Rio T."/>
            <person name="Dalin E."/>
            <person name="Tice H."/>
            <person name="Pitluck S."/>
            <person name="Bruce D."/>
            <person name="Goodwin L."/>
            <person name="Saunders E."/>
            <person name="Brettin T."/>
            <person name="Detter J.C."/>
            <person name="Han C."/>
            <person name="Schmutz J."/>
            <person name="Larimer F."/>
            <person name="Land M."/>
            <person name="Hauser L."/>
            <person name="Kyrpides N."/>
            <person name="Lykidis A."/>
            <person name="Hemme C."/>
            <person name="Fields M.W."/>
            <person name="He Z."/>
            <person name="Zhou J."/>
            <person name="Richardson P."/>
        </authorList>
    </citation>
    <scope>NUCLEOTIDE SEQUENCE [LARGE SCALE GENOMIC DNA]</scope>
    <source>
        <strain>ATCC 33223 / DSM 2355 / 39E</strain>
    </source>
</reference>
<gene>
    <name evidence="1" type="primary">clpX</name>
    <name type="ordered locus">Teth39_1650</name>
</gene>
<protein>
    <recommendedName>
        <fullName evidence="1">ATP-dependent Clp protease ATP-binding subunit ClpX</fullName>
    </recommendedName>
</protein>
<feature type="chain" id="PRO_1000098011" description="ATP-dependent Clp protease ATP-binding subunit ClpX">
    <location>
        <begin position="1"/>
        <end position="424"/>
    </location>
</feature>
<feature type="domain" description="ClpX-type ZB" evidence="2">
    <location>
        <begin position="1"/>
        <end position="53"/>
    </location>
</feature>
<feature type="binding site" evidence="2">
    <location>
        <position position="12"/>
    </location>
    <ligand>
        <name>Zn(2+)</name>
        <dbReference type="ChEBI" id="CHEBI:29105"/>
    </ligand>
</feature>
<feature type="binding site" evidence="2">
    <location>
        <position position="15"/>
    </location>
    <ligand>
        <name>Zn(2+)</name>
        <dbReference type="ChEBI" id="CHEBI:29105"/>
    </ligand>
</feature>
<feature type="binding site" evidence="2">
    <location>
        <position position="34"/>
    </location>
    <ligand>
        <name>Zn(2+)</name>
        <dbReference type="ChEBI" id="CHEBI:29105"/>
    </ligand>
</feature>
<feature type="binding site" evidence="2">
    <location>
        <position position="37"/>
    </location>
    <ligand>
        <name>Zn(2+)</name>
        <dbReference type="ChEBI" id="CHEBI:29105"/>
    </ligand>
</feature>
<feature type="binding site" evidence="1">
    <location>
        <begin position="116"/>
        <end position="123"/>
    </location>
    <ligand>
        <name>ATP</name>
        <dbReference type="ChEBI" id="CHEBI:30616"/>
    </ligand>
</feature>
<accession>B0KBA3</accession>
<sequence>MAKYDNQKQLKCSFCGKTQDQVKRLVAGPGVYICDECIELCQEIINEEFEEDMDMGIGELPKPKEIKEFLDQYVIGQEKAKKALAVAVYNHYKRINSRIKPDDVELQKSNILLLGPTGSGKTLLAQTLAKLLNVPFAIADATSLTEAGYVGEDVENILLKLIQAADYDIEKAEKGIIYIDEIDKIARKSENPSITRDVSGEGVQQALLKILEGTIANVPPQGGRKHPHQEFIQIDTTNILFICGGAFEGIEKIIESRIGKKSLGFGAEVQSRKEKDLSEILSHIMPQDLLKFGMIPEFIGRVPIVVTLDPLSKDDLVRILTEPKNALTKQYEKLFELDGVKLEFDKKALGLIADMALERKTGARGLRAILEEIMLDVMYEIPSSDNIEKCIITEETVLKKAPPTLVYSDAQKAKKKIKKTESVS</sequence>
<name>CLPX_THEP3</name>
<organism>
    <name type="scientific">Thermoanaerobacter pseudethanolicus (strain ATCC 33223 / 39E)</name>
    <name type="common">Clostridium thermohydrosulfuricum</name>
    <dbReference type="NCBI Taxonomy" id="340099"/>
    <lineage>
        <taxon>Bacteria</taxon>
        <taxon>Bacillati</taxon>
        <taxon>Bacillota</taxon>
        <taxon>Clostridia</taxon>
        <taxon>Thermoanaerobacterales</taxon>
        <taxon>Thermoanaerobacteraceae</taxon>
        <taxon>Thermoanaerobacter</taxon>
    </lineage>
</organism>
<dbReference type="EMBL" id="CP000924">
    <property type="protein sequence ID" value="ABY95291.1"/>
    <property type="molecule type" value="Genomic_DNA"/>
</dbReference>
<dbReference type="RefSeq" id="WP_003870584.1">
    <property type="nucleotide sequence ID" value="NC_010321.1"/>
</dbReference>
<dbReference type="SMR" id="B0KBA3"/>
<dbReference type="STRING" id="340099.Teth39_1650"/>
<dbReference type="KEGG" id="tpd:Teth39_1650"/>
<dbReference type="eggNOG" id="COG1219">
    <property type="taxonomic scope" value="Bacteria"/>
</dbReference>
<dbReference type="HOGENOM" id="CLU_014218_8_2_9"/>
<dbReference type="Proteomes" id="UP000002156">
    <property type="component" value="Chromosome"/>
</dbReference>
<dbReference type="GO" id="GO:0009376">
    <property type="term" value="C:HslUV protease complex"/>
    <property type="evidence" value="ECO:0007669"/>
    <property type="project" value="TreeGrafter"/>
</dbReference>
<dbReference type="GO" id="GO:0005524">
    <property type="term" value="F:ATP binding"/>
    <property type="evidence" value="ECO:0007669"/>
    <property type="project" value="UniProtKB-UniRule"/>
</dbReference>
<dbReference type="GO" id="GO:0016887">
    <property type="term" value="F:ATP hydrolysis activity"/>
    <property type="evidence" value="ECO:0007669"/>
    <property type="project" value="InterPro"/>
</dbReference>
<dbReference type="GO" id="GO:0140662">
    <property type="term" value="F:ATP-dependent protein folding chaperone"/>
    <property type="evidence" value="ECO:0007669"/>
    <property type="project" value="InterPro"/>
</dbReference>
<dbReference type="GO" id="GO:0046983">
    <property type="term" value="F:protein dimerization activity"/>
    <property type="evidence" value="ECO:0007669"/>
    <property type="project" value="InterPro"/>
</dbReference>
<dbReference type="GO" id="GO:0051082">
    <property type="term" value="F:unfolded protein binding"/>
    <property type="evidence" value="ECO:0007669"/>
    <property type="project" value="UniProtKB-UniRule"/>
</dbReference>
<dbReference type="GO" id="GO:0008270">
    <property type="term" value="F:zinc ion binding"/>
    <property type="evidence" value="ECO:0007669"/>
    <property type="project" value="InterPro"/>
</dbReference>
<dbReference type="GO" id="GO:0051301">
    <property type="term" value="P:cell division"/>
    <property type="evidence" value="ECO:0007669"/>
    <property type="project" value="TreeGrafter"/>
</dbReference>
<dbReference type="GO" id="GO:0051603">
    <property type="term" value="P:proteolysis involved in protein catabolic process"/>
    <property type="evidence" value="ECO:0007669"/>
    <property type="project" value="TreeGrafter"/>
</dbReference>
<dbReference type="CDD" id="cd19497">
    <property type="entry name" value="RecA-like_ClpX"/>
    <property type="match status" value="1"/>
</dbReference>
<dbReference type="FunFam" id="1.10.8.60:FF:000002">
    <property type="entry name" value="ATP-dependent Clp protease ATP-binding subunit ClpX"/>
    <property type="match status" value="1"/>
</dbReference>
<dbReference type="FunFam" id="3.40.50.300:FF:000005">
    <property type="entry name" value="ATP-dependent Clp protease ATP-binding subunit ClpX"/>
    <property type="match status" value="1"/>
</dbReference>
<dbReference type="Gene3D" id="1.10.8.60">
    <property type="match status" value="1"/>
</dbReference>
<dbReference type="Gene3D" id="6.20.220.10">
    <property type="entry name" value="ClpX chaperone, C4-type zinc finger domain"/>
    <property type="match status" value="1"/>
</dbReference>
<dbReference type="Gene3D" id="3.40.50.300">
    <property type="entry name" value="P-loop containing nucleotide triphosphate hydrolases"/>
    <property type="match status" value="1"/>
</dbReference>
<dbReference type="HAMAP" id="MF_00175">
    <property type="entry name" value="ClpX"/>
    <property type="match status" value="1"/>
</dbReference>
<dbReference type="InterPro" id="IPR003593">
    <property type="entry name" value="AAA+_ATPase"/>
</dbReference>
<dbReference type="InterPro" id="IPR050052">
    <property type="entry name" value="ATP-dep_Clp_protease_ClpX"/>
</dbReference>
<dbReference type="InterPro" id="IPR003959">
    <property type="entry name" value="ATPase_AAA_core"/>
</dbReference>
<dbReference type="InterPro" id="IPR019489">
    <property type="entry name" value="Clp_ATPase_C"/>
</dbReference>
<dbReference type="InterPro" id="IPR004487">
    <property type="entry name" value="Clp_protease_ATP-bd_su_ClpX"/>
</dbReference>
<dbReference type="InterPro" id="IPR046425">
    <property type="entry name" value="ClpX_bact"/>
</dbReference>
<dbReference type="InterPro" id="IPR027417">
    <property type="entry name" value="P-loop_NTPase"/>
</dbReference>
<dbReference type="InterPro" id="IPR010603">
    <property type="entry name" value="Znf_CppX_C4"/>
</dbReference>
<dbReference type="InterPro" id="IPR038366">
    <property type="entry name" value="Znf_CppX_C4_sf"/>
</dbReference>
<dbReference type="NCBIfam" id="TIGR00382">
    <property type="entry name" value="clpX"/>
    <property type="match status" value="1"/>
</dbReference>
<dbReference type="NCBIfam" id="NF003745">
    <property type="entry name" value="PRK05342.1"/>
    <property type="match status" value="1"/>
</dbReference>
<dbReference type="PANTHER" id="PTHR48102:SF7">
    <property type="entry name" value="ATP-DEPENDENT CLP PROTEASE ATP-BINDING SUBUNIT CLPX-LIKE, MITOCHONDRIAL"/>
    <property type="match status" value="1"/>
</dbReference>
<dbReference type="PANTHER" id="PTHR48102">
    <property type="entry name" value="ATP-DEPENDENT CLP PROTEASE ATP-BINDING SUBUNIT CLPX-LIKE, MITOCHONDRIAL-RELATED"/>
    <property type="match status" value="1"/>
</dbReference>
<dbReference type="Pfam" id="PF07724">
    <property type="entry name" value="AAA_2"/>
    <property type="match status" value="1"/>
</dbReference>
<dbReference type="Pfam" id="PF10431">
    <property type="entry name" value="ClpB_D2-small"/>
    <property type="match status" value="1"/>
</dbReference>
<dbReference type="Pfam" id="PF06689">
    <property type="entry name" value="zf-C4_ClpX"/>
    <property type="match status" value="1"/>
</dbReference>
<dbReference type="SMART" id="SM00382">
    <property type="entry name" value="AAA"/>
    <property type="match status" value="1"/>
</dbReference>
<dbReference type="SMART" id="SM01086">
    <property type="entry name" value="ClpB_D2-small"/>
    <property type="match status" value="1"/>
</dbReference>
<dbReference type="SMART" id="SM00994">
    <property type="entry name" value="zf-C4_ClpX"/>
    <property type="match status" value="1"/>
</dbReference>
<dbReference type="SUPFAM" id="SSF57716">
    <property type="entry name" value="Glucocorticoid receptor-like (DNA-binding domain)"/>
    <property type="match status" value="1"/>
</dbReference>
<dbReference type="SUPFAM" id="SSF52540">
    <property type="entry name" value="P-loop containing nucleoside triphosphate hydrolases"/>
    <property type="match status" value="1"/>
</dbReference>
<dbReference type="PROSITE" id="PS51902">
    <property type="entry name" value="CLPX_ZB"/>
    <property type="match status" value="1"/>
</dbReference>